<organism>
    <name type="scientific">Salmonella dublin (strain CT_02021853)</name>
    <dbReference type="NCBI Taxonomy" id="439851"/>
    <lineage>
        <taxon>Bacteria</taxon>
        <taxon>Pseudomonadati</taxon>
        <taxon>Pseudomonadota</taxon>
        <taxon>Gammaproteobacteria</taxon>
        <taxon>Enterobacterales</taxon>
        <taxon>Enterobacteriaceae</taxon>
        <taxon>Salmonella</taxon>
    </lineage>
</organism>
<sequence length="373" mass="39736">MKSGRFIGVMSGTSLDGVDVVLAAIDETMVAQQASLTWPIPVHLKKGILDICQGQPLTLSQLGQLDTQLGRLFAQAVNALLAQQRLQPRDIVAIGCHGQTVWHEPTGEAPHTLQIGDNNHIVAHTGITVVGDFRRRDIALGGQGAPLVPAFHHALLGHPTEKRMVLNIGGIANLSLLFPGQAVRGYDTGPGNMLMDAWIWRQCAQPYDKDAAWAKEGQVILPLLQKMLRDPYFAASAPKSTGREYFNYGWLERHLAAFPGADARDVQATLAELTAVSIAQQVLLNGGCERLMVCGGGGRNPLVMARLAALLPGIEVSTTDKAGISGDDMEALAFAWLAWRTLAGLPGNLPSVTGATEASVLGAIYPANPITQS</sequence>
<proteinExistence type="inferred from homology"/>
<gene>
    <name evidence="1" type="primary">anmK</name>
    <name type="ordered locus">SeD_A1897</name>
</gene>
<reference key="1">
    <citation type="journal article" date="2011" name="J. Bacteriol.">
        <title>Comparative genomics of 28 Salmonella enterica isolates: evidence for CRISPR-mediated adaptive sublineage evolution.</title>
        <authorList>
            <person name="Fricke W.F."/>
            <person name="Mammel M.K."/>
            <person name="McDermott P.F."/>
            <person name="Tartera C."/>
            <person name="White D.G."/>
            <person name="Leclerc J.E."/>
            <person name="Ravel J."/>
            <person name="Cebula T.A."/>
        </authorList>
    </citation>
    <scope>NUCLEOTIDE SEQUENCE [LARGE SCALE GENOMIC DNA]</scope>
    <source>
        <strain>CT_02021853</strain>
    </source>
</reference>
<accession>B5FIF7</accession>
<protein>
    <recommendedName>
        <fullName evidence="1">Anhydro-N-acetylmuramic acid kinase</fullName>
        <ecNumber evidence="1">2.7.1.170</ecNumber>
    </recommendedName>
    <alternativeName>
        <fullName evidence="1">AnhMurNAc kinase</fullName>
    </alternativeName>
</protein>
<keyword id="KW-0067">ATP-binding</keyword>
<keyword id="KW-0119">Carbohydrate metabolism</keyword>
<keyword id="KW-0418">Kinase</keyword>
<keyword id="KW-0547">Nucleotide-binding</keyword>
<keyword id="KW-0808">Transferase</keyword>
<evidence type="ECO:0000255" key="1">
    <source>
        <dbReference type="HAMAP-Rule" id="MF_01270"/>
    </source>
</evidence>
<feature type="chain" id="PRO_1000140168" description="Anhydro-N-acetylmuramic acid kinase">
    <location>
        <begin position="1"/>
        <end position="373"/>
    </location>
</feature>
<feature type="binding site" evidence="1">
    <location>
        <begin position="12"/>
        <end position="19"/>
    </location>
    <ligand>
        <name>ATP</name>
        <dbReference type="ChEBI" id="CHEBI:30616"/>
    </ligand>
</feature>
<name>ANMK_SALDC</name>
<comment type="function">
    <text evidence="1">Catalyzes the specific phosphorylation of 1,6-anhydro-N-acetylmuramic acid (anhMurNAc) with the simultaneous cleavage of the 1,6-anhydro ring, generating MurNAc-6-P. Is required for the utilization of anhMurNAc either imported from the medium or derived from its own cell wall murein, and thus plays a role in cell wall recycling.</text>
</comment>
<comment type="catalytic activity">
    <reaction evidence="1">
        <text>1,6-anhydro-N-acetyl-beta-muramate + ATP + H2O = N-acetyl-D-muramate 6-phosphate + ADP + H(+)</text>
        <dbReference type="Rhea" id="RHEA:24952"/>
        <dbReference type="ChEBI" id="CHEBI:15377"/>
        <dbReference type="ChEBI" id="CHEBI:15378"/>
        <dbReference type="ChEBI" id="CHEBI:30616"/>
        <dbReference type="ChEBI" id="CHEBI:58690"/>
        <dbReference type="ChEBI" id="CHEBI:58722"/>
        <dbReference type="ChEBI" id="CHEBI:456216"/>
        <dbReference type="EC" id="2.7.1.170"/>
    </reaction>
</comment>
<comment type="pathway">
    <text evidence="1">Amino-sugar metabolism; 1,6-anhydro-N-acetylmuramate degradation.</text>
</comment>
<comment type="pathway">
    <text evidence="1">Cell wall biogenesis; peptidoglycan recycling.</text>
</comment>
<comment type="similarity">
    <text evidence="1">Belongs to the anhydro-N-acetylmuramic acid kinase family.</text>
</comment>
<dbReference type="EC" id="2.7.1.170" evidence="1"/>
<dbReference type="EMBL" id="CP001144">
    <property type="protein sequence ID" value="ACH73735.1"/>
    <property type="molecule type" value="Genomic_DNA"/>
</dbReference>
<dbReference type="RefSeq" id="WP_000835011.1">
    <property type="nucleotide sequence ID" value="NC_011205.1"/>
</dbReference>
<dbReference type="SMR" id="B5FIF7"/>
<dbReference type="KEGG" id="sed:SeD_A1897"/>
<dbReference type="HOGENOM" id="CLU_038782_0_0_6"/>
<dbReference type="UniPathway" id="UPA00343"/>
<dbReference type="UniPathway" id="UPA00544"/>
<dbReference type="Proteomes" id="UP000008322">
    <property type="component" value="Chromosome"/>
</dbReference>
<dbReference type="GO" id="GO:0005524">
    <property type="term" value="F:ATP binding"/>
    <property type="evidence" value="ECO:0007669"/>
    <property type="project" value="UniProtKB-UniRule"/>
</dbReference>
<dbReference type="GO" id="GO:0016301">
    <property type="term" value="F:kinase activity"/>
    <property type="evidence" value="ECO:0007669"/>
    <property type="project" value="UniProtKB-KW"/>
</dbReference>
<dbReference type="GO" id="GO:0016773">
    <property type="term" value="F:phosphotransferase activity, alcohol group as acceptor"/>
    <property type="evidence" value="ECO:0007669"/>
    <property type="project" value="UniProtKB-UniRule"/>
</dbReference>
<dbReference type="GO" id="GO:0097175">
    <property type="term" value="P:1,6-anhydro-N-acetyl-beta-muramic acid catabolic process"/>
    <property type="evidence" value="ECO:0007669"/>
    <property type="project" value="UniProtKB-UniRule"/>
</dbReference>
<dbReference type="GO" id="GO:0006040">
    <property type="term" value="P:amino sugar metabolic process"/>
    <property type="evidence" value="ECO:0007669"/>
    <property type="project" value="InterPro"/>
</dbReference>
<dbReference type="GO" id="GO:0009254">
    <property type="term" value="P:peptidoglycan turnover"/>
    <property type="evidence" value="ECO:0007669"/>
    <property type="project" value="UniProtKB-UniRule"/>
</dbReference>
<dbReference type="CDD" id="cd24050">
    <property type="entry name" value="ASKHA_NBD_ANMK"/>
    <property type="match status" value="1"/>
</dbReference>
<dbReference type="Gene3D" id="3.30.420.40">
    <property type="match status" value="2"/>
</dbReference>
<dbReference type="HAMAP" id="MF_01270">
    <property type="entry name" value="AnhMurNAc_kinase"/>
    <property type="match status" value="1"/>
</dbReference>
<dbReference type="InterPro" id="IPR005338">
    <property type="entry name" value="Anhydro_N_Ac-Mur_kinase"/>
</dbReference>
<dbReference type="InterPro" id="IPR043129">
    <property type="entry name" value="ATPase_NBD"/>
</dbReference>
<dbReference type="NCBIfam" id="NF007138">
    <property type="entry name" value="PRK09585.1-1"/>
    <property type="match status" value="1"/>
</dbReference>
<dbReference type="NCBIfam" id="NF007139">
    <property type="entry name" value="PRK09585.1-3"/>
    <property type="match status" value="1"/>
</dbReference>
<dbReference type="NCBIfam" id="NF007148">
    <property type="entry name" value="PRK09585.3-2"/>
    <property type="match status" value="1"/>
</dbReference>
<dbReference type="PANTHER" id="PTHR30605">
    <property type="entry name" value="ANHYDRO-N-ACETYLMURAMIC ACID KINASE"/>
    <property type="match status" value="1"/>
</dbReference>
<dbReference type="PANTHER" id="PTHR30605:SF0">
    <property type="entry name" value="ANHYDRO-N-ACETYLMURAMIC ACID KINASE"/>
    <property type="match status" value="1"/>
</dbReference>
<dbReference type="Pfam" id="PF03702">
    <property type="entry name" value="AnmK"/>
    <property type="match status" value="1"/>
</dbReference>
<dbReference type="SUPFAM" id="SSF53067">
    <property type="entry name" value="Actin-like ATPase domain"/>
    <property type="match status" value="1"/>
</dbReference>